<proteinExistence type="evidence at protein level"/>
<organism>
    <name type="scientific">Enterobacteria phage T4</name>
    <name type="common">Bacteriophage T4</name>
    <dbReference type="NCBI Taxonomy" id="10665"/>
    <lineage>
        <taxon>Viruses</taxon>
        <taxon>Duplodnaviria</taxon>
        <taxon>Heunggongvirae</taxon>
        <taxon>Uroviricota</taxon>
        <taxon>Caudoviricetes</taxon>
        <taxon>Straboviridae</taxon>
        <taxon>Tevenvirinae</taxon>
        <taxon>Tequatrovirus</taxon>
    </lineage>
</organism>
<feature type="chain" id="PRO_0000164931" description="Double-stranded DNA-binding protein">
    <location>
        <begin position="1"/>
        <end position="89"/>
    </location>
</feature>
<reference key="1">
    <citation type="journal article" date="1989" name="Nucleic Acids Res.">
        <title>Organization of the bacteriophage T4 genome between map positions 150.745 and 145.824.</title>
        <authorList>
            <person name="Hahn S."/>
            <person name="Rueger W."/>
        </authorList>
    </citation>
    <scope>NUCLEOTIDE SEQUENCE [GENOMIC DNA]</scope>
    <source>
        <strain>BK536</strain>
    </source>
</reference>
<reference key="2">
    <citation type="journal article" date="2003" name="Microbiol. Mol. Biol. Rev.">
        <title>Bacteriophage T4 genome.</title>
        <authorList>
            <person name="Miller E.S."/>
            <person name="Kutter E."/>
            <person name="Mosig G."/>
            <person name="Arisaka F."/>
            <person name="Kunisawa T."/>
            <person name="Ruger W."/>
        </authorList>
    </citation>
    <scope>NUCLEOTIDE SEQUENCE [LARGE SCALE GENOMIC DNA]</scope>
</reference>
<reference key="3">
    <citation type="journal article" date="1991" name="Mol. Gen. Genet.">
        <title>Gene product dsbA of bacteriophage T4 binds to late promoters and enhances late transcription.</title>
        <authorList>
            <person name="Gansz A."/>
            <person name="Kruse U."/>
            <person name="Rueger W."/>
        </authorList>
    </citation>
    <scope>FUNCTION</scope>
</reference>
<reference key="4">
    <citation type="journal article" date="1998" name="Biol. Chem.">
        <title>Overexpression and structural characterization of the phage T4 protein DsbA.</title>
        <authorList>
            <person name="Sieber P."/>
            <person name="Lindemann A."/>
            <person name="Boehm M."/>
            <person name="Seidel G."/>
            <person name="Herzing U."/>
            <person name="van der Heusen P."/>
            <person name="Muller R."/>
            <person name="Ruger W."/>
            <person name="Jaenicke R."/>
            <person name="Rosch P."/>
        </authorList>
    </citation>
    <scope>SUBUNIT</scope>
</reference>
<keyword id="KW-0235">DNA replication</keyword>
<keyword id="KW-0238">DNA-binding</keyword>
<keyword id="KW-1185">Reference proteome</keyword>
<evidence type="ECO:0000269" key="1">
    <source>
    </source>
</evidence>
<evidence type="ECO:0000269" key="2">
    <source>
    </source>
</evidence>
<dbReference type="EMBL" id="X15818">
    <property type="protein sequence ID" value="CAA33813.1"/>
    <property type="molecule type" value="Genomic_DNA"/>
</dbReference>
<dbReference type="EMBL" id="AF158101">
    <property type="protein sequence ID" value="AAD42567.1"/>
    <property type="molecule type" value="Genomic_DNA"/>
</dbReference>
<dbReference type="PIR" id="S05557">
    <property type="entry name" value="S05557"/>
</dbReference>
<dbReference type="RefSeq" id="NP_049858.1">
    <property type="nucleotide sequence ID" value="NC_000866.4"/>
</dbReference>
<dbReference type="SMR" id="P13320"/>
<dbReference type="GeneID" id="1258620"/>
<dbReference type="KEGG" id="vg:1258620"/>
<dbReference type="OrthoDB" id="21560at10239"/>
<dbReference type="Proteomes" id="UP000009087">
    <property type="component" value="Segment"/>
</dbReference>
<dbReference type="GO" id="GO:0003677">
    <property type="term" value="F:DNA binding"/>
    <property type="evidence" value="ECO:0007669"/>
    <property type="project" value="UniProtKB-KW"/>
</dbReference>
<dbReference type="GO" id="GO:0006260">
    <property type="term" value="P:DNA replication"/>
    <property type="evidence" value="ECO:0007669"/>
    <property type="project" value="UniProtKB-KW"/>
</dbReference>
<dbReference type="InterPro" id="IPR020313">
    <property type="entry name" value="Double-stranded_DNA-bd"/>
</dbReference>
<dbReference type="Pfam" id="PF11126">
    <property type="entry name" value="Phage_DsbA"/>
    <property type="match status" value="1"/>
</dbReference>
<organismHost>
    <name type="scientific">Escherichia coli</name>
    <dbReference type="NCBI Taxonomy" id="562"/>
</organismHost>
<gene>
    <name type="primary">dsbA</name>
    <name type="synonym">rpbB</name>
</gene>
<comment type="function">
    <text evidence="1">May play a role in transcription of several T4 genes. Binds double-stranded DNA and interacts preferentially with T4 late promoter regions.</text>
</comment>
<comment type="subunit">
    <text evidence="2">Homodimer.</text>
</comment>
<accession>P13320</accession>
<protein>
    <recommendedName>
        <fullName>Double-stranded DNA-binding protein</fullName>
    </recommendedName>
    <alternativeName>
        <fullName>DsDNA-binding protein A</fullName>
    </alternativeName>
</protein>
<name>DSBA_BPT4</name>
<sequence>MAKKEMVEFDEAIHGEDLAKFIKEASDHKLKISGYNELIKDIRIRAKDELGVDGKMFNRLLALYHKDNRDVFEAETEEVVELYDTVFSK</sequence>